<name>FITM2_BOVIN</name>
<evidence type="ECO:0000255" key="1"/>
<evidence type="ECO:0000255" key="2">
    <source>
        <dbReference type="HAMAP-Rule" id="MF_03230"/>
    </source>
</evidence>
<evidence type="ECO:0000305" key="3"/>
<feature type="chain" id="PRO_0000350632" description="Acyl-coenzyme A diphosphatase FITM2">
    <location>
        <begin position="1"/>
        <end position="262"/>
    </location>
</feature>
<feature type="topological domain" description="Cytoplasmic" evidence="3">
    <location>
        <begin position="1"/>
        <end position="23"/>
    </location>
</feature>
<feature type="transmembrane region" description="Helical" evidence="1">
    <location>
        <begin position="24"/>
        <end position="44"/>
    </location>
</feature>
<feature type="topological domain" description="Lumenal" evidence="3">
    <location>
        <begin position="45"/>
        <end position="57"/>
    </location>
</feature>
<feature type="transmembrane region" description="Helical" evidence="1">
    <location>
        <begin position="58"/>
        <end position="78"/>
    </location>
</feature>
<feature type="topological domain" description="Cytoplasmic" evidence="3">
    <location>
        <begin position="79"/>
        <end position="93"/>
    </location>
</feature>
<feature type="transmembrane region" description="Helical" evidence="1">
    <location>
        <begin position="94"/>
        <end position="114"/>
    </location>
</feature>
<feature type="topological domain" description="Lumenal" evidence="3">
    <location>
        <begin position="115"/>
        <end position="145"/>
    </location>
</feature>
<feature type="transmembrane region" description="Helical" evidence="1">
    <location>
        <begin position="146"/>
        <end position="166"/>
    </location>
</feature>
<feature type="topological domain" description="Cytoplasmic" evidence="3">
    <location>
        <begin position="167"/>
        <end position="190"/>
    </location>
</feature>
<feature type="transmembrane region" description="Helical" evidence="1">
    <location>
        <begin position="191"/>
        <end position="211"/>
    </location>
</feature>
<feature type="topological domain" description="Lumenal" evidence="3">
    <location>
        <begin position="212"/>
        <end position="218"/>
    </location>
</feature>
<feature type="transmembrane region" description="Helical" evidence="1">
    <location>
        <begin position="219"/>
        <end position="239"/>
    </location>
</feature>
<feature type="topological domain" description="Cytoplasmic" evidence="3">
    <location>
        <begin position="240"/>
        <end position="262"/>
    </location>
</feature>
<feature type="active site" evidence="2">
    <location>
        <position position="155"/>
    </location>
</feature>
<feature type="active site" evidence="2">
    <location>
        <position position="214"/>
    </location>
</feature>
<comment type="function">
    <text evidence="2">Fatty acyl-coenzyme A (CoA) diphosphatase that hydrolyzes fatty acyl-CoA to yield acyl-4'-phosphopantetheine and adenosine 3',5'-bisphosphate (By similarity). Preferentially hydrolyzes unsaturated long-chain acyl-CoA substrates such as oleoyl-CoA/(9Z)-octadecenoyl-CoA and arachidonoyl-CoA/(5Z,8Z,11Z,14Z)-eicosatetraenoyl-CoA in the endoplasmic reticulum (ER) lumen (By similarity). This catalytic activity is required for maintaining ER structure and for lipid droplets (LDs) biogenesis, which are lipid storage organelles involved in maintaining lipid and energy homeostasis (By similarity). Directly binds to diacylglycerol (DAGs) and triacylglycerol, which is also important for LD biogenesis (By similarity). May support directional budding of nacent LDs from the ER into the cytosol by reducing DAG levels at sites of LD formation (By similarity). Plays a role in the regulation of cell morphology and cytoskeletal organization (By similarity).</text>
</comment>
<comment type="catalytic activity">
    <reaction evidence="2">
        <text>an acyl-CoA + H2O = an acyl-4'-phosphopantetheine + adenosine 3',5'-bisphosphate + 2 H(+)</text>
        <dbReference type="Rhea" id="RHEA:50044"/>
        <dbReference type="ChEBI" id="CHEBI:15377"/>
        <dbReference type="ChEBI" id="CHEBI:15378"/>
        <dbReference type="ChEBI" id="CHEBI:58342"/>
        <dbReference type="ChEBI" id="CHEBI:58343"/>
        <dbReference type="ChEBI" id="CHEBI:132023"/>
    </reaction>
    <physiologicalReaction direction="left-to-right" evidence="2">
        <dbReference type="Rhea" id="RHEA:50045"/>
    </physiologicalReaction>
</comment>
<comment type="catalytic activity">
    <reaction evidence="2">
        <text>(9Z)-octadecenoyl-CoA + H2O = S-(9Z-octadecenoyl)-4'-phosphopantetheine + adenosine 3',5'-bisphosphate + 2 H(+)</text>
        <dbReference type="Rhea" id="RHEA:65564"/>
        <dbReference type="ChEBI" id="CHEBI:15377"/>
        <dbReference type="ChEBI" id="CHEBI:15378"/>
        <dbReference type="ChEBI" id="CHEBI:57387"/>
        <dbReference type="ChEBI" id="CHEBI:58343"/>
        <dbReference type="ChEBI" id="CHEBI:156553"/>
    </reaction>
    <physiologicalReaction direction="left-to-right" evidence="2">
        <dbReference type="Rhea" id="RHEA:65565"/>
    </physiologicalReaction>
</comment>
<comment type="catalytic activity">
    <reaction evidence="2">
        <text>(5Z,8Z,11Z,14Z)-eicosatetraenoyl-CoA + H2O = S-(5Z,8Z,11Z,14Z-eicosatetraenoyl)-4'-phosphopantetheine + adenosine 3',5'-bisphosphate + 2 H(+)</text>
        <dbReference type="Rhea" id="RHEA:65568"/>
        <dbReference type="ChEBI" id="CHEBI:15377"/>
        <dbReference type="ChEBI" id="CHEBI:15378"/>
        <dbReference type="ChEBI" id="CHEBI:57368"/>
        <dbReference type="ChEBI" id="CHEBI:58343"/>
        <dbReference type="ChEBI" id="CHEBI:156554"/>
    </reaction>
    <physiologicalReaction direction="left-to-right" evidence="2">
        <dbReference type="Rhea" id="RHEA:65569"/>
    </physiologicalReaction>
</comment>
<comment type="catalytic activity">
    <reaction evidence="2">
        <text>hexadecanoyl-CoA + H2O = S-hexadecanoyl-4'-phosphopantetheine + adenosine 3',5'-bisphosphate + 2 H(+)</text>
        <dbReference type="Rhea" id="RHEA:50032"/>
        <dbReference type="ChEBI" id="CHEBI:15377"/>
        <dbReference type="ChEBI" id="CHEBI:15378"/>
        <dbReference type="ChEBI" id="CHEBI:57379"/>
        <dbReference type="ChEBI" id="CHEBI:58343"/>
        <dbReference type="ChEBI" id="CHEBI:132018"/>
    </reaction>
    <physiologicalReaction direction="left-to-right" evidence="2">
        <dbReference type="Rhea" id="RHEA:50033"/>
    </physiologicalReaction>
</comment>
<comment type="subcellular location">
    <subcellularLocation>
        <location evidence="2">Endoplasmic reticulum membrane</location>
        <topology evidence="2">Multi-pass membrane protein</topology>
    </subcellularLocation>
</comment>
<comment type="similarity">
    <text evidence="2">Belongs to the FIT family. FIT2 subfamily.</text>
</comment>
<organism>
    <name type="scientific">Bos taurus</name>
    <name type="common">Bovine</name>
    <dbReference type="NCBI Taxonomy" id="9913"/>
    <lineage>
        <taxon>Eukaryota</taxon>
        <taxon>Metazoa</taxon>
        <taxon>Chordata</taxon>
        <taxon>Craniata</taxon>
        <taxon>Vertebrata</taxon>
        <taxon>Euteleostomi</taxon>
        <taxon>Mammalia</taxon>
        <taxon>Eutheria</taxon>
        <taxon>Laurasiatheria</taxon>
        <taxon>Artiodactyla</taxon>
        <taxon>Ruminantia</taxon>
        <taxon>Pecora</taxon>
        <taxon>Bovidae</taxon>
        <taxon>Bovinae</taxon>
        <taxon>Bos</taxon>
    </lineage>
</organism>
<accession>A4IFN5</accession>
<dbReference type="EC" id="3.6.1.-" evidence="2"/>
<dbReference type="EMBL" id="BC134674">
    <property type="protein sequence ID" value="AAI34675.1"/>
    <property type="molecule type" value="mRNA"/>
</dbReference>
<dbReference type="RefSeq" id="NP_001096565.1">
    <property type="nucleotide sequence ID" value="NM_001103095.1"/>
</dbReference>
<dbReference type="FunCoup" id="A4IFN5">
    <property type="interactions" value="914"/>
</dbReference>
<dbReference type="STRING" id="9913.ENSBTAP00000026679"/>
<dbReference type="PaxDb" id="9913-ENSBTAP00000026679"/>
<dbReference type="Ensembl" id="ENSBTAT00000026679.6">
    <property type="protein sequence ID" value="ENSBTAP00000026679.5"/>
    <property type="gene ID" value="ENSBTAG00000020030.6"/>
</dbReference>
<dbReference type="GeneID" id="518159"/>
<dbReference type="KEGG" id="bta:518159"/>
<dbReference type="CTD" id="128486"/>
<dbReference type="VEuPathDB" id="HostDB:ENSBTAG00000020030"/>
<dbReference type="VGNC" id="VGNC:29016">
    <property type="gene designation" value="FITM2"/>
</dbReference>
<dbReference type="eggNOG" id="KOG3750">
    <property type="taxonomic scope" value="Eukaryota"/>
</dbReference>
<dbReference type="GeneTree" id="ENSGT00530000063693"/>
<dbReference type="HOGENOM" id="CLU_049499_1_1_1"/>
<dbReference type="InParanoid" id="A4IFN5"/>
<dbReference type="OMA" id="TYRFWYL"/>
<dbReference type="OrthoDB" id="5579088at2759"/>
<dbReference type="Reactome" id="R-BTA-8964572">
    <property type="pathway name" value="Lipid particle organization"/>
</dbReference>
<dbReference type="Proteomes" id="UP000009136">
    <property type="component" value="Chromosome 13"/>
</dbReference>
<dbReference type="Bgee" id="ENSBTAG00000020030">
    <property type="expression patterns" value="Expressed in cardiac atrium and 103 other cell types or tissues"/>
</dbReference>
<dbReference type="GO" id="GO:0005789">
    <property type="term" value="C:endoplasmic reticulum membrane"/>
    <property type="evidence" value="ECO:0000250"/>
    <property type="project" value="UniProtKB"/>
</dbReference>
<dbReference type="GO" id="GO:0010945">
    <property type="term" value="F:coenzyme A diphosphatase activity"/>
    <property type="evidence" value="ECO:0000250"/>
    <property type="project" value="UniProtKB"/>
</dbReference>
<dbReference type="GO" id="GO:0019992">
    <property type="term" value="F:diacylglycerol binding"/>
    <property type="evidence" value="ECO:0000250"/>
    <property type="project" value="UniProtKB"/>
</dbReference>
<dbReference type="GO" id="GO:0017129">
    <property type="term" value="F:triglyceride binding"/>
    <property type="evidence" value="ECO:0000250"/>
    <property type="project" value="UniProtKB"/>
</dbReference>
<dbReference type="GO" id="GO:0007010">
    <property type="term" value="P:cytoskeleton organization"/>
    <property type="evidence" value="ECO:0000250"/>
    <property type="project" value="UniProtKB"/>
</dbReference>
<dbReference type="GO" id="GO:0045444">
    <property type="term" value="P:fat cell differentiation"/>
    <property type="evidence" value="ECO:0000250"/>
    <property type="project" value="UniProtKB"/>
</dbReference>
<dbReference type="GO" id="GO:0036115">
    <property type="term" value="P:fatty-acyl-CoA catabolic process"/>
    <property type="evidence" value="ECO:0000250"/>
    <property type="project" value="UniProtKB"/>
</dbReference>
<dbReference type="GO" id="GO:0035356">
    <property type="term" value="P:intracellular triglyceride homeostasis"/>
    <property type="evidence" value="ECO:0000250"/>
    <property type="project" value="UniProtKB"/>
</dbReference>
<dbReference type="GO" id="GO:0140042">
    <property type="term" value="P:lipid droplet formation"/>
    <property type="evidence" value="ECO:0000250"/>
    <property type="project" value="UniProtKB"/>
</dbReference>
<dbReference type="GO" id="GO:0034389">
    <property type="term" value="P:lipid droplet organization"/>
    <property type="evidence" value="ECO:0000250"/>
    <property type="project" value="UniProtKB"/>
</dbReference>
<dbReference type="GO" id="GO:0055088">
    <property type="term" value="P:lipid homeostasis"/>
    <property type="evidence" value="ECO:0000250"/>
    <property type="project" value="UniProtKB"/>
</dbReference>
<dbReference type="GO" id="GO:0019915">
    <property type="term" value="P:lipid storage"/>
    <property type="evidence" value="ECO:0000318"/>
    <property type="project" value="GO_Central"/>
</dbReference>
<dbReference type="GO" id="GO:0008654">
    <property type="term" value="P:phospholipid biosynthetic process"/>
    <property type="evidence" value="ECO:0000318"/>
    <property type="project" value="GO_Central"/>
</dbReference>
<dbReference type="GO" id="GO:0022604">
    <property type="term" value="P:regulation of cell morphogenesis"/>
    <property type="evidence" value="ECO:0000250"/>
    <property type="project" value="UniProtKB"/>
</dbReference>
<dbReference type="GO" id="GO:0006641">
    <property type="term" value="P:triglyceride metabolic process"/>
    <property type="evidence" value="ECO:0000250"/>
    <property type="project" value="UniProtKB"/>
</dbReference>
<dbReference type="GO" id="GO:0030730">
    <property type="term" value="P:triglyceride storage"/>
    <property type="evidence" value="ECO:0007669"/>
    <property type="project" value="Ensembl"/>
</dbReference>
<dbReference type="HAMAP" id="MF_03230">
    <property type="entry name" value="FITM2"/>
    <property type="match status" value="1"/>
</dbReference>
<dbReference type="InterPro" id="IPR019388">
    <property type="entry name" value="FIT"/>
</dbReference>
<dbReference type="InterPro" id="IPR046401">
    <property type="entry name" value="FITM1/2"/>
</dbReference>
<dbReference type="PANTHER" id="PTHR23129">
    <property type="entry name" value="ACYL-COENZYME A DIPHOSPHATASE FITM2"/>
    <property type="match status" value="1"/>
</dbReference>
<dbReference type="PANTHER" id="PTHR23129:SF1">
    <property type="entry name" value="ACYL-COENZYME A DIPHOSPHATASE FITM2"/>
    <property type="match status" value="1"/>
</dbReference>
<dbReference type="Pfam" id="PF10261">
    <property type="entry name" value="FIT"/>
    <property type="match status" value="2"/>
</dbReference>
<proteinExistence type="evidence at transcript level"/>
<keyword id="KW-0256">Endoplasmic reticulum</keyword>
<keyword id="KW-0378">Hydrolase</keyword>
<keyword id="KW-0443">Lipid metabolism</keyword>
<keyword id="KW-0472">Membrane</keyword>
<keyword id="KW-1185">Reference proteome</keyword>
<keyword id="KW-0812">Transmembrane</keyword>
<keyword id="KW-1133">Transmembrane helix</keyword>
<sequence length="262" mass="29716">MEHLERCAWVLRGTLVRSAVRKYLPWALAASMLAGSLLKELSPLPESYLSNKRNVLNVYFVKVAWAWTFCLLLPFIALTNYHLTGKAGLVLRRLSTLLVGTAIWYVCTAIFSNIEHYTGSCYQSPALEGERKEHQSKQQCHGEGGFWHGFDISGHSFLLTFCALMIVEEMAVLHEVKTDRNHCLHAAITTLVVALGFLTFIWVWMFLCTAVYFHNLSQKVFGTLFGLLGWYGTYGCWYLKSFSPGLPPQSSSLNLKQDTYKK</sequence>
<protein>
    <recommendedName>
        <fullName evidence="2">Acyl-coenzyme A diphosphatase FITM2</fullName>
        <ecNumber evidence="2">3.6.1.-</ecNumber>
    </recommendedName>
    <alternativeName>
        <fullName evidence="2">Fat storage-inducing transmembrane protein 2</fullName>
    </alternativeName>
    <alternativeName>
        <fullName evidence="2">Fat-inducing protein 2</fullName>
    </alternativeName>
</protein>
<gene>
    <name evidence="2" type="primary">FITM2</name>
    <name evidence="2" type="synonym">FIT2</name>
</gene>
<reference key="1">
    <citation type="submission" date="2007-03" db="EMBL/GenBank/DDBJ databases">
        <authorList>
            <consortium name="NIH - Mammalian Gene Collection (MGC) project"/>
        </authorList>
    </citation>
    <scope>NUCLEOTIDE SEQUENCE [LARGE SCALE MRNA]</scope>
    <source>
        <strain>Hereford</strain>
        <tissue>Fetal skin</tissue>
    </source>
</reference>